<proteinExistence type="inferred from homology"/>
<feature type="chain" id="PRO_1000188456" description="UPF0597 protein YhaM">
    <location>
        <begin position="1"/>
        <end position="436"/>
    </location>
</feature>
<dbReference type="EMBL" id="CU928160">
    <property type="protein sequence ID" value="CAR00073.1"/>
    <property type="molecule type" value="Genomic_DNA"/>
</dbReference>
<dbReference type="KEGG" id="ecr:ECIAI1_3259"/>
<dbReference type="HOGENOM" id="CLU_051840_0_0_6"/>
<dbReference type="GO" id="GO:0080146">
    <property type="term" value="F:L-cysteine desulfhydrase activity"/>
    <property type="evidence" value="ECO:0007669"/>
    <property type="project" value="TreeGrafter"/>
</dbReference>
<dbReference type="GO" id="GO:0019450">
    <property type="term" value="P:L-cysteine catabolic process to pyruvate"/>
    <property type="evidence" value="ECO:0007669"/>
    <property type="project" value="TreeGrafter"/>
</dbReference>
<dbReference type="HAMAP" id="MF_01845">
    <property type="entry name" value="UPF0597"/>
    <property type="match status" value="1"/>
</dbReference>
<dbReference type="InterPro" id="IPR005130">
    <property type="entry name" value="Ser_deHydtase-like_asu"/>
</dbReference>
<dbReference type="InterPro" id="IPR021144">
    <property type="entry name" value="UPF0597"/>
</dbReference>
<dbReference type="PANTHER" id="PTHR30501">
    <property type="entry name" value="UPF0597 PROTEIN YHAM"/>
    <property type="match status" value="1"/>
</dbReference>
<dbReference type="PANTHER" id="PTHR30501:SF2">
    <property type="entry name" value="UPF0597 PROTEIN YHAM"/>
    <property type="match status" value="1"/>
</dbReference>
<dbReference type="Pfam" id="PF03313">
    <property type="entry name" value="SDH_alpha"/>
    <property type="match status" value="1"/>
</dbReference>
<dbReference type="PIRSF" id="PIRSF006054">
    <property type="entry name" value="UCP006054"/>
    <property type="match status" value="1"/>
</dbReference>
<reference key="1">
    <citation type="journal article" date="2009" name="PLoS Genet.">
        <title>Organised genome dynamics in the Escherichia coli species results in highly diverse adaptive paths.</title>
        <authorList>
            <person name="Touchon M."/>
            <person name="Hoede C."/>
            <person name="Tenaillon O."/>
            <person name="Barbe V."/>
            <person name="Baeriswyl S."/>
            <person name="Bidet P."/>
            <person name="Bingen E."/>
            <person name="Bonacorsi S."/>
            <person name="Bouchier C."/>
            <person name="Bouvet O."/>
            <person name="Calteau A."/>
            <person name="Chiapello H."/>
            <person name="Clermont O."/>
            <person name="Cruveiller S."/>
            <person name="Danchin A."/>
            <person name="Diard M."/>
            <person name="Dossat C."/>
            <person name="Karoui M.E."/>
            <person name="Frapy E."/>
            <person name="Garry L."/>
            <person name="Ghigo J.M."/>
            <person name="Gilles A.M."/>
            <person name="Johnson J."/>
            <person name="Le Bouguenec C."/>
            <person name="Lescat M."/>
            <person name="Mangenot S."/>
            <person name="Martinez-Jehanne V."/>
            <person name="Matic I."/>
            <person name="Nassif X."/>
            <person name="Oztas S."/>
            <person name="Petit M.A."/>
            <person name="Pichon C."/>
            <person name="Rouy Z."/>
            <person name="Ruf C.S."/>
            <person name="Schneider D."/>
            <person name="Tourret J."/>
            <person name="Vacherie B."/>
            <person name="Vallenet D."/>
            <person name="Medigue C."/>
            <person name="Rocha E.P.C."/>
            <person name="Denamur E."/>
        </authorList>
    </citation>
    <scope>NUCLEOTIDE SEQUENCE [LARGE SCALE GENOMIC DNA]</scope>
    <source>
        <strain>IAI1</strain>
    </source>
</reference>
<name>YHAM_ECO8A</name>
<evidence type="ECO:0000255" key="1">
    <source>
        <dbReference type="HAMAP-Rule" id="MF_01845"/>
    </source>
</evidence>
<gene>
    <name evidence="1" type="primary">yhaM</name>
    <name type="ordered locus">ECIAI1_3259</name>
</gene>
<sequence>MFDSTLNPLWQRYILAVQEEVKPALGCTEPISLALAAAVAAAELEGPVERVEAWVSPNLMKNGLGVTVPGTGMVGLPIAAALGALGGNANAGLEVLKDATAQAIADAKALLAAGKVSVKIQEPCNEILFSRAKVWNGEKWACVTIVGGHTNIVHIETHNGVVFTQQACVAEGEQESPLTVLSRTTLAEILKFVNEVPFAAIRFILDSAKLNCALSQEGLSGKWGLHIGATLEKQCERGLLAKDLSSSIVIRTSAASDARMGGATLPAMSNSGSGNQGITATMPVVVVAEHFGADDERLARALMLSHLSAIYIHNQLPRLSALCAATTAAMGAAAGMAWLVDGRYETISMAISSMIGDVSGMICDGASNSCAMKVSTSASAAWKAVLMALDDTAVTGNEGIVAHDVEQSIANLCALASHSMQQTDRQIIEIMASKAR</sequence>
<protein>
    <recommendedName>
        <fullName evidence="1">UPF0597 protein YhaM</fullName>
    </recommendedName>
</protein>
<comment type="similarity">
    <text evidence="1">Belongs to the UPF0597 family.</text>
</comment>
<accession>B7M017</accession>
<organism>
    <name type="scientific">Escherichia coli O8 (strain IAI1)</name>
    <dbReference type="NCBI Taxonomy" id="585034"/>
    <lineage>
        <taxon>Bacteria</taxon>
        <taxon>Pseudomonadati</taxon>
        <taxon>Pseudomonadota</taxon>
        <taxon>Gammaproteobacteria</taxon>
        <taxon>Enterobacterales</taxon>
        <taxon>Enterobacteriaceae</taxon>
        <taxon>Escherichia</taxon>
    </lineage>
</organism>